<protein>
    <recommendedName>
        <fullName evidence="1">NAD-dependent malic enzyme 2</fullName>
        <shortName evidence="1">NAD-ME 2</shortName>
        <ecNumber evidence="1">1.1.1.38</ecNumber>
    </recommendedName>
</protein>
<reference key="1">
    <citation type="journal article" date="2005" name="Science">
        <title>Life at depth: Photobacterium profundum genome sequence and expression analysis.</title>
        <authorList>
            <person name="Vezzi A."/>
            <person name="Campanaro S."/>
            <person name="D'Angelo M."/>
            <person name="Simonato F."/>
            <person name="Vitulo N."/>
            <person name="Lauro F.M."/>
            <person name="Cestaro A."/>
            <person name="Malacrida G."/>
            <person name="Simionati B."/>
            <person name="Cannata N."/>
            <person name="Romualdi C."/>
            <person name="Bartlett D.H."/>
            <person name="Valle G."/>
        </authorList>
    </citation>
    <scope>NUCLEOTIDE SEQUENCE [LARGE SCALE GENOMIC DNA]</scope>
    <source>
        <strain>ATCC BAA-1253 / SS9</strain>
    </source>
</reference>
<name>MAO12_PHOPR</name>
<keyword id="KW-0479">Metal-binding</keyword>
<keyword id="KW-0520">NAD</keyword>
<keyword id="KW-0560">Oxidoreductase</keyword>
<keyword id="KW-1185">Reference proteome</keyword>
<comment type="catalytic activity">
    <reaction evidence="1">
        <text>(S)-malate + NAD(+) = pyruvate + CO2 + NADH</text>
        <dbReference type="Rhea" id="RHEA:12653"/>
        <dbReference type="ChEBI" id="CHEBI:15361"/>
        <dbReference type="ChEBI" id="CHEBI:15589"/>
        <dbReference type="ChEBI" id="CHEBI:16526"/>
        <dbReference type="ChEBI" id="CHEBI:57540"/>
        <dbReference type="ChEBI" id="CHEBI:57945"/>
        <dbReference type="EC" id="1.1.1.38"/>
    </reaction>
</comment>
<comment type="catalytic activity">
    <reaction evidence="1">
        <text>oxaloacetate + H(+) = pyruvate + CO2</text>
        <dbReference type="Rhea" id="RHEA:15641"/>
        <dbReference type="ChEBI" id="CHEBI:15361"/>
        <dbReference type="ChEBI" id="CHEBI:15378"/>
        <dbReference type="ChEBI" id="CHEBI:16452"/>
        <dbReference type="ChEBI" id="CHEBI:16526"/>
        <dbReference type="EC" id="1.1.1.38"/>
    </reaction>
</comment>
<comment type="cofactor">
    <cofactor evidence="1">
        <name>Mg(2+)</name>
        <dbReference type="ChEBI" id="CHEBI:18420"/>
    </cofactor>
    <cofactor evidence="1">
        <name>Mn(2+)</name>
        <dbReference type="ChEBI" id="CHEBI:29035"/>
    </cofactor>
    <text evidence="1">Divalent metal cations. Prefers magnesium or manganese.</text>
</comment>
<comment type="subunit">
    <text evidence="1">Homotetramer.</text>
</comment>
<comment type="similarity">
    <text evidence="1">Belongs to the malic enzymes family.</text>
</comment>
<dbReference type="EC" id="1.1.1.38" evidence="1"/>
<dbReference type="EMBL" id="CR378679">
    <property type="protein sequence ID" value="CAG23225.1"/>
    <property type="molecule type" value="Genomic_DNA"/>
</dbReference>
<dbReference type="RefSeq" id="WP_011221405.1">
    <property type="nucleotide sequence ID" value="NC_006371.1"/>
</dbReference>
<dbReference type="SMR" id="Q6LHK5"/>
<dbReference type="STRING" id="298386.PBPRB1354"/>
<dbReference type="KEGG" id="ppr:PBPRB1354"/>
<dbReference type="eggNOG" id="COG0281">
    <property type="taxonomic scope" value="Bacteria"/>
</dbReference>
<dbReference type="HOGENOM" id="CLU_011405_5_2_6"/>
<dbReference type="Proteomes" id="UP000000593">
    <property type="component" value="Chromosome 2"/>
</dbReference>
<dbReference type="GO" id="GO:0005829">
    <property type="term" value="C:cytosol"/>
    <property type="evidence" value="ECO:0007669"/>
    <property type="project" value="TreeGrafter"/>
</dbReference>
<dbReference type="GO" id="GO:0004471">
    <property type="term" value="F:malate dehydrogenase (decarboxylating) (NAD+) activity"/>
    <property type="evidence" value="ECO:0007669"/>
    <property type="project" value="UniProtKB-UniRule"/>
</dbReference>
<dbReference type="GO" id="GO:0046872">
    <property type="term" value="F:metal ion binding"/>
    <property type="evidence" value="ECO:0007669"/>
    <property type="project" value="UniProtKB-KW"/>
</dbReference>
<dbReference type="GO" id="GO:0051287">
    <property type="term" value="F:NAD binding"/>
    <property type="evidence" value="ECO:0007669"/>
    <property type="project" value="InterPro"/>
</dbReference>
<dbReference type="GO" id="GO:0008948">
    <property type="term" value="F:oxaloacetate decarboxylase activity"/>
    <property type="evidence" value="ECO:0007669"/>
    <property type="project" value="UniProtKB-UniRule"/>
</dbReference>
<dbReference type="GO" id="GO:0006108">
    <property type="term" value="P:malate metabolic process"/>
    <property type="evidence" value="ECO:0007669"/>
    <property type="project" value="TreeGrafter"/>
</dbReference>
<dbReference type="CDD" id="cd05312">
    <property type="entry name" value="NAD_bind_1_malic_enz"/>
    <property type="match status" value="1"/>
</dbReference>
<dbReference type="FunFam" id="3.40.50.10380:FF:000001">
    <property type="entry name" value="NAD-dependent malic enzyme"/>
    <property type="match status" value="1"/>
</dbReference>
<dbReference type="FunFam" id="3.40.50.720:FF:000055">
    <property type="entry name" value="NAD-dependent malic enzyme"/>
    <property type="match status" value="1"/>
</dbReference>
<dbReference type="Gene3D" id="3.40.50.10380">
    <property type="entry name" value="Malic enzyme, N-terminal domain"/>
    <property type="match status" value="1"/>
</dbReference>
<dbReference type="Gene3D" id="3.40.50.720">
    <property type="entry name" value="NAD(P)-binding Rossmann-like Domain"/>
    <property type="match status" value="1"/>
</dbReference>
<dbReference type="HAMAP" id="MF_01619">
    <property type="entry name" value="NAD_malic_enz"/>
    <property type="match status" value="1"/>
</dbReference>
<dbReference type="InterPro" id="IPR046346">
    <property type="entry name" value="Aminoacid_DH-like_N_sf"/>
</dbReference>
<dbReference type="InterPro" id="IPR015884">
    <property type="entry name" value="Malic_enzyme_CS"/>
</dbReference>
<dbReference type="InterPro" id="IPR012301">
    <property type="entry name" value="Malic_N_dom"/>
</dbReference>
<dbReference type="InterPro" id="IPR037062">
    <property type="entry name" value="Malic_N_dom_sf"/>
</dbReference>
<dbReference type="InterPro" id="IPR012302">
    <property type="entry name" value="Malic_NAD-bd"/>
</dbReference>
<dbReference type="InterPro" id="IPR001891">
    <property type="entry name" value="Malic_OxRdtase"/>
</dbReference>
<dbReference type="InterPro" id="IPR036291">
    <property type="entry name" value="NAD(P)-bd_dom_sf"/>
</dbReference>
<dbReference type="InterPro" id="IPR023667">
    <property type="entry name" value="NAD_malic_enz_proteobac"/>
</dbReference>
<dbReference type="NCBIfam" id="NF010052">
    <property type="entry name" value="PRK13529.1"/>
    <property type="match status" value="1"/>
</dbReference>
<dbReference type="PANTHER" id="PTHR23406">
    <property type="entry name" value="MALIC ENZYME-RELATED"/>
    <property type="match status" value="1"/>
</dbReference>
<dbReference type="PANTHER" id="PTHR23406:SF34">
    <property type="entry name" value="NAD-DEPENDENT MALIC ENZYME, MITOCHONDRIAL"/>
    <property type="match status" value="1"/>
</dbReference>
<dbReference type="Pfam" id="PF00390">
    <property type="entry name" value="malic"/>
    <property type="match status" value="1"/>
</dbReference>
<dbReference type="Pfam" id="PF03949">
    <property type="entry name" value="Malic_M"/>
    <property type="match status" value="1"/>
</dbReference>
<dbReference type="PIRSF" id="PIRSF000106">
    <property type="entry name" value="ME"/>
    <property type="match status" value="1"/>
</dbReference>
<dbReference type="PRINTS" id="PR00072">
    <property type="entry name" value="MALOXRDTASE"/>
</dbReference>
<dbReference type="SMART" id="SM01274">
    <property type="entry name" value="malic"/>
    <property type="match status" value="1"/>
</dbReference>
<dbReference type="SMART" id="SM00919">
    <property type="entry name" value="Malic_M"/>
    <property type="match status" value="1"/>
</dbReference>
<dbReference type="SUPFAM" id="SSF53223">
    <property type="entry name" value="Aminoacid dehydrogenase-like, N-terminal domain"/>
    <property type="match status" value="1"/>
</dbReference>
<dbReference type="SUPFAM" id="SSF51735">
    <property type="entry name" value="NAD(P)-binding Rossmann-fold domains"/>
    <property type="match status" value="1"/>
</dbReference>
<dbReference type="PROSITE" id="PS00331">
    <property type="entry name" value="MALIC_ENZYMES"/>
    <property type="match status" value="1"/>
</dbReference>
<gene>
    <name evidence="1" type="primary">maeA2</name>
    <name type="ordered locus">PBPRB1354</name>
</gene>
<feature type="chain" id="PRO_0000160222" description="NAD-dependent malic enzyme 2">
    <location>
        <begin position="1"/>
        <end position="558"/>
    </location>
</feature>
<feature type="active site" description="Proton donor" evidence="1">
    <location>
        <position position="101"/>
    </location>
</feature>
<feature type="active site" description="Proton acceptor" evidence="1">
    <location>
        <position position="172"/>
    </location>
</feature>
<feature type="binding site" evidence="1">
    <location>
        <position position="154"/>
    </location>
    <ligand>
        <name>NAD(+)</name>
        <dbReference type="ChEBI" id="CHEBI:57540"/>
    </ligand>
</feature>
<feature type="binding site" evidence="1">
    <location>
        <position position="243"/>
    </location>
    <ligand>
        <name>a divalent metal cation</name>
        <dbReference type="ChEBI" id="CHEBI:60240"/>
    </ligand>
</feature>
<feature type="binding site" evidence="1">
    <location>
        <position position="244"/>
    </location>
    <ligand>
        <name>a divalent metal cation</name>
        <dbReference type="ChEBI" id="CHEBI:60240"/>
    </ligand>
</feature>
<feature type="binding site" evidence="1">
    <location>
        <position position="267"/>
    </location>
    <ligand>
        <name>a divalent metal cation</name>
        <dbReference type="ChEBI" id="CHEBI:60240"/>
    </ligand>
</feature>
<feature type="binding site" evidence="1">
    <location>
        <position position="267"/>
    </location>
    <ligand>
        <name>NAD(+)</name>
        <dbReference type="ChEBI" id="CHEBI:57540"/>
    </ligand>
</feature>
<feature type="binding site" evidence="1">
    <location>
        <position position="411"/>
    </location>
    <ligand>
        <name>NAD(+)</name>
        <dbReference type="ChEBI" id="CHEBI:57540"/>
    </ligand>
</feature>
<feature type="site" description="Important for activity" evidence="1">
    <location>
        <position position="267"/>
    </location>
</feature>
<evidence type="ECO:0000255" key="1">
    <source>
        <dbReference type="HAMAP-Rule" id="MF_01619"/>
    </source>
</evidence>
<accession>Q6LHK5</accession>
<proteinExistence type="inferred from homology"/>
<sequence length="558" mass="61562">MYENNKTLYLPYAGPTLLENALLNKGSAFSPEERQNFSLMGLLPAAIESITEQEERAYSQYQTFNDDMDKHIYLRNIQDTNETLYYRLIDNHIEEMMPIIYTPTVGAACEQFSNIYRRGRGLFLGYPDKGNIVDILNNAARQDVKIIVITDGERILGLGDQGIGGMGIPIGKLALYTACGGINPANTLPIVLDVGTNNTQLLSDPMYMGWRHPRITGQEYDDFVEEFIQAVKSRWPNALIQFEDFAQKNAMPLLNRYKDKVCCFNDDIQGTAAVTVGSLLAACKAAGSELSEQRITFVGAGSAGCGIAEAIVAQMIAEGLSDSAARARIFMVDRWGLLTDNMQNLLDFQQKLAQKSATVSQWNETGNISLLDVVSNGKPTVLIGVPGLFSQEVIMEMHAHCKRPIVLPLSNPTSRVEATPSDIIRWTEGDALIATGSPFDPVIFNEKTYPIAQCNNSYIFPGIGLGVLASGATRVTDEMLMESSRVLAECSPLAQNGNGALLPPLKDIHQVSHCIALAVAKKAVEQNKAPQRTEKQLLEKIESYFWKPEYLKYKRTAL</sequence>
<organism>
    <name type="scientific">Photobacterium profundum (strain SS9)</name>
    <dbReference type="NCBI Taxonomy" id="298386"/>
    <lineage>
        <taxon>Bacteria</taxon>
        <taxon>Pseudomonadati</taxon>
        <taxon>Pseudomonadota</taxon>
        <taxon>Gammaproteobacteria</taxon>
        <taxon>Vibrionales</taxon>
        <taxon>Vibrionaceae</taxon>
        <taxon>Photobacterium</taxon>
    </lineage>
</organism>